<organism>
    <name type="scientific">Homo sapiens</name>
    <name type="common">Human</name>
    <dbReference type="NCBI Taxonomy" id="9606"/>
    <lineage>
        <taxon>Eukaryota</taxon>
        <taxon>Metazoa</taxon>
        <taxon>Chordata</taxon>
        <taxon>Craniata</taxon>
        <taxon>Vertebrata</taxon>
        <taxon>Euteleostomi</taxon>
        <taxon>Mammalia</taxon>
        <taxon>Eutheria</taxon>
        <taxon>Euarchontoglires</taxon>
        <taxon>Primates</taxon>
        <taxon>Haplorrhini</taxon>
        <taxon>Catarrhini</taxon>
        <taxon>Hominidae</taxon>
        <taxon>Homo</taxon>
    </lineage>
</organism>
<reference key="1">
    <citation type="journal article" date="1999" name="FEBS Lett.">
        <title>The human cadherin-10 gene: complete coding sequence, predominant expression in the brain, and mapping on chromosome 5p13-14.</title>
        <authorList>
            <person name="Kools P."/>
            <person name="Vanhalst K."/>
            <person name="van den Eynde E."/>
            <person name="van Roy F."/>
        </authorList>
    </citation>
    <scope>NUCLEOTIDE SEQUENCE [MRNA]</scope>
    <scope>TISSUE SPECIFICITY</scope>
</reference>
<reference key="2">
    <citation type="journal article" date="2000" name="Biochem. J.">
        <title>Identification of three human type-II classic cadherins and frequent heterophilic interactions between different subclasses of type-II classic cadherins.</title>
        <authorList>
            <person name="Shimoyama Y."/>
            <person name="Tsujimoto G."/>
            <person name="Kitajima M."/>
            <person name="Natori M."/>
        </authorList>
    </citation>
    <scope>NUCLEOTIDE SEQUENCE [MRNA]</scope>
</reference>
<reference key="3">
    <citation type="journal article" date="2008" name="Proc. Natl. Acad. Sci. U.S.A.">
        <title>A quantitative atlas of mitotic phosphorylation.</title>
        <authorList>
            <person name="Dephoure N."/>
            <person name="Zhou C."/>
            <person name="Villen J."/>
            <person name="Beausoleil S.A."/>
            <person name="Bakalarski C.E."/>
            <person name="Elledge S.J."/>
            <person name="Gygi S.P."/>
        </authorList>
    </citation>
    <scope>PHOSPHORYLATION [LARGE SCALE ANALYSIS] AT SER-784</scope>
    <scope>IDENTIFICATION BY MASS SPECTROMETRY [LARGE SCALE ANALYSIS]</scope>
    <source>
        <tissue>Cervix carcinoma</tissue>
    </source>
</reference>
<reference key="4">
    <citation type="journal article" date="2010" name="Sci. Signal.">
        <title>Quantitative phosphoproteomics reveals widespread full phosphorylation site occupancy during mitosis.</title>
        <authorList>
            <person name="Olsen J.V."/>
            <person name="Vermeulen M."/>
            <person name="Santamaria A."/>
            <person name="Kumar C."/>
            <person name="Miller M.L."/>
            <person name="Jensen L.J."/>
            <person name="Gnad F."/>
            <person name="Cox J."/>
            <person name="Jensen T.S."/>
            <person name="Nigg E.A."/>
            <person name="Brunak S."/>
            <person name="Mann M."/>
        </authorList>
    </citation>
    <scope>PHOSPHORYLATION [LARGE SCALE ANALYSIS] AT SER-784</scope>
    <scope>IDENTIFICATION BY MASS SPECTROMETRY [LARGE SCALE ANALYSIS]</scope>
    <source>
        <tissue>Cervix carcinoma</tissue>
    </source>
</reference>
<reference key="5">
    <citation type="journal article" date="2006" name="Science">
        <title>The consensus coding sequences of human breast and colorectal cancers.</title>
        <authorList>
            <person name="Sjoeblom T."/>
            <person name="Jones S."/>
            <person name="Wood L.D."/>
            <person name="Parsons D.W."/>
            <person name="Lin J."/>
            <person name="Barber T.D."/>
            <person name="Mandelker D."/>
            <person name="Leary R.J."/>
            <person name="Ptak J."/>
            <person name="Silliman N."/>
            <person name="Szabo S."/>
            <person name="Buckhaults P."/>
            <person name="Farrell C."/>
            <person name="Meeh P."/>
            <person name="Markowitz S.D."/>
            <person name="Willis J."/>
            <person name="Dawson D."/>
            <person name="Willson J.K.V."/>
            <person name="Gazdar A.F."/>
            <person name="Hartigan J."/>
            <person name="Wu L."/>
            <person name="Liu C."/>
            <person name="Parmigiani G."/>
            <person name="Park B.H."/>
            <person name="Bachman K.E."/>
            <person name="Papadopoulos N."/>
            <person name="Vogelstein B."/>
            <person name="Kinzler K.W."/>
            <person name="Velculescu V.E."/>
        </authorList>
    </citation>
    <scope>VARIANT [LARGE SCALE ANALYSIS] LEU-371</scope>
</reference>
<comment type="function">
    <text>Cadherins are calcium-dependent cell adhesion proteins. They preferentially interact with themselves in a homophilic manner in connecting cells; cadherins may thus contribute to the sorting of heterogeneous cell types.</text>
</comment>
<comment type="subcellular location">
    <subcellularLocation>
        <location evidence="7">Cell membrane</location>
        <topology evidence="7">Single-pass type I membrane protein</topology>
    </subcellularLocation>
</comment>
<comment type="tissue specificity">
    <text evidence="5">Predominantly expressed in brain. Also found in adult and fetal kidney. Very low levels detected in prostate and fetal lung.</text>
</comment>
<comment type="domain">
    <text evidence="1">Three calcium ions are usually bound at the interface of each cadherin domain and rigidify the connections, imparting a strong curvature to the full-length ectodomain.</text>
</comment>
<protein>
    <recommendedName>
        <fullName>Cadherin-10</fullName>
    </recommendedName>
    <alternativeName>
        <fullName>T2-cadherin</fullName>
    </alternativeName>
</protein>
<accession>Q9Y6N8</accession>
<accession>Q9ULB3</accession>
<gene>
    <name type="primary">CDH10</name>
</gene>
<proteinExistence type="evidence at protein level"/>
<feature type="signal peptide" evidence="3">
    <location>
        <begin position="1"/>
        <end position="22"/>
    </location>
</feature>
<feature type="propeptide" id="PRO_0000003781" evidence="3">
    <location>
        <begin position="23"/>
        <end position="54"/>
    </location>
</feature>
<feature type="chain" id="PRO_0000003782" description="Cadherin-10">
    <location>
        <begin position="55"/>
        <end position="788"/>
    </location>
</feature>
<feature type="topological domain" description="Extracellular" evidence="3">
    <location>
        <begin position="55"/>
        <end position="613"/>
    </location>
</feature>
<feature type="transmembrane region" description="Helical" evidence="3">
    <location>
        <begin position="614"/>
        <end position="634"/>
    </location>
</feature>
<feature type="topological domain" description="Cytoplasmic" evidence="3">
    <location>
        <begin position="635"/>
        <end position="788"/>
    </location>
</feature>
<feature type="domain" description="Cadherin 1" evidence="4">
    <location>
        <begin position="55"/>
        <end position="160"/>
    </location>
</feature>
<feature type="domain" description="Cadherin 2" evidence="4">
    <location>
        <begin position="161"/>
        <end position="269"/>
    </location>
</feature>
<feature type="domain" description="Cadherin 3" evidence="4">
    <location>
        <begin position="270"/>
        <end position="384"/>
    </location>
</feature>
<feature type="domain" description="Cadherin 4" evidence="4">
    <location>
        <begin position="385"/>
        <end position="487"/>
    </location>
</feature>
<feature type="domain" description="Cadherin 5" evidence="4">
    <location>
        <begin position="488"/>
        <end position="606"/>
    </location>
</feature>
<feature type="modified residue" description="Phosphoserine" evidence="8 9">
    <location>
        <position position="784"/>
    </location>
</feature>
<feature type="modified residue" description="Phosphoserine" evidence="2">
    <location>
        <position position="788"/>
    </location>
</feature>
<feature type="glycosylation site" description="N-linked (GlcNAc...) asparagine" evidence="3">
    <location>
        <position position="256"/>
    </location>
</feature>
<feature type="glycosylation site" description="N-linked (GlcNAc...) asparagine" evidence="3">
    <location>
        <position position="438"/>
    </location>
</feature>
<feature type="glycosylation site" description="N-linked (GlcNAc...) asparagine" evidence="3">
    <location>
        <position position="456"/>
    </location>
</feature>
<feature type="glycosylation site" description="N-linked (GlcNAc...) asparagine" evidence="3">
    <location>
        <position position="534"/>
    </location>
</feature>
<feature type="sequence variant" id="VAR_036102" description="In a breast cancer sample; somatic mutation; dbSNP:rs2111752566." evidence="6">
    <original>V</original>
    <variation>L</variation>
    <location>
        <position position="371"/>
    </location>
</feature>
<feature type="sequence variant" id="VAR_028751" description="In dbSNP:rs1395027.">
    <original>S</original>
    <variation>F</variation>
    <location>
        <position position="413"/>
    </location>
</feature>
<feature type="sequence conflict" description="In Ref. 1; AAD44017." evidence="7" ref="1">
    <original>Q</original>
    <variation>R</variation>
    <location>
        <position position="34"/>
    </location>
</feature>
<feature type="sequence conflict" description="In Ref. 1; AAD44017." evidence="7" ref="1">
    <original>V</original>
    <variation>A</variation>
    <location>
        <position position="482"/>
    </location>
</feature>
<name>CAD10_HUMAN</name>
<keyword id="KW-0106">Calcium</keyword>
<keyword id="KW-0130">Cell adhesion</keyword>
<keyword id="KW-1003">Cell membrane</keyword>
<keyword id="KW-0165">Cleavage on pair of basic residues</keyword>
<keyword id="KW-0325">Glycoprotein</keyword>
<keyword id="KW-0472">Membrane</keyword>
<keyword id="KW-0479">Metal-binding</keyword>
<keyword id="KW-0597">Phosphoprotein</keyword>
<keyword id="KW-1267">Proteomics identification</keyword>
<keyword id="KW-1185">Reference proteome</keyword>
<keyword id="KW-0677">Repeat</keyword>
<keyword id="KW-0732">Signal</keyword>
<keyword id="KW-0812">Transmembrane</keyword>
<keyword id="KW-1133">Transmembrane helix</keyword>
<evidence type="ECO:0000250" key="1"/>
<evidence type="ECO:0000250" key="2">
    <source>
        <dbReference type="UniProtKB" id="P97326"/>
    </source>
</evidence>
<evidence type="ECO:0000255" key="3"/>
<evidence type="ECO:0000255" key="4">
    <source>
        <dbReference type="PROSITE-ProRule" id="PRU00043"/>
    </source>
</evidence>
<evidence type="ECO:0000269" key="5">
    <source>
    </source>
</evidence>
<evidence type="ECO:0000269" key="6">
    <source>
    </source>
</evidence>
<evidence type="ECO:0000305" key="7"/>
<evidence type="ECO:0007744" key="8">
    <source>
    </source>
</evidence>
<evidence type="ECO:0007744" key="9">
    <source>
    </source>
</evidence>
<sequence length="788" mass="88451">MTIHQFLLLFLFWVCLPHFCSPEIMFRRTPVPQQRILSSRVPRSDGKILHRQKRGWMWNQFFLLEEYTGSDYQYVGKLHSDQDKGDGSLKYILSGDGAGTLFIIDEKTGDIHATRRIDREEKAFYTLRAQAINRRTLRPVEPESEFVIKIHDINDNEPTFPEEIYTASVPEMSVVGTSVVQVTATDADDPSYGNSARVIYSILQGQPYFSVEPETGIIRTALPNMNRENREQYQVVIQAKDMGGQMGGLSGTTTVNITLTDVNDNPPRFPQNTIHLRVLESSPVGTAIGSVKATDADTGKNAEVEYRIIDGDGTDMFDIVTEKDTQEGIITVKKPLDYESRRLYTLKVEAENTHVDPRFYYLGPFKDTTIVKISIEDVDEPPVFSRSSYLFEVHEDIEVGTIIGTVMARDPDSISSPIRFSLDRHTDLDRIFNIHSGNGSLYTSKPLDRELSQWHNLTVIAAEINNPKETTRVAVFVRILDVNDNAPQFAVFYDTFVCENARPGQLIQTISAVDKDDPLGGQKFFFSLAAVNPNFTVQDNEDNTARILTRKNGFNRHEISTYLLPVVISDNDYPIQSSTGTLTIRVCACDSQGNMQSCSAEALLLPAGLSTGALIAILLCIIILLVIVVLFAALKRQRKKEPLILSKEDIRDNIVSYNDEGGGEEDTQAFDIGTLRNPAAIEEKKLRRDIIPETLFIPRRTPTAPDNTDVRDFINERLKEHDLDPTAPPYDSLATYAYEGNDSIAESLSSLESGTTEGDQNYDYLREWGPRFNKLAEMYGGGESDKDS</sequence>
<dbReference type="EMBL" id="AF039747">
    <property type="protein sequence ID" value="AAD44017.1"/>
    <property type="molecule type" value="mRNA"/>
</dbReference>
<dbReference type="EMBL" id="AB035303">
    <property type="protein sequence ID" value="BAA87417.1"/>
    <property type="molecule type" value="mRNA"/>
</dbReference>
<dbReference type="CCDS" id="CCDS3892.1"/>
<dbReference type="RefSeq" id="NP_006718.2">
    <property type="nucleotide sequence ID" value="NM_006727.4"/>
</dbReference>
<dbReference type="RefSeq" id="XP_011512225.1">
    <property type="nucleotide sequence ID" value="XM_011513923.3"/>
</dbReference>
<dbReference type="RefSeq" id="XP_054207358.1">
    <property type="nucleotide sequence ID" value="XM_054351383.1"/>
</dbReference>
<dbReference type="SMR" id="Q9Y6N8"/>
<dbReference type="BioGRID" id="107443">
    <property type="interactions" value="6"/>
</dbReference>
<dbReference type="FunCoup" id="Q9Y6N8">
    <property type="interactions" value="367"/>
</dbReference>
<dbReference type="IntAct" id="Q9Y6N8">
    <property type="interactions" value="5"/>
</dbReference>
<dbReference type="MINT" id="Q9Y6N8"/>
<dbReference type="STRING" id="9606.ENSP00000264463"/>
<dbReference type="GlyCosmos" id="Q9Y6N8">
    <property type="glycosylation" value="4 sites, No reported glycans"/>
</dbReference>
<dbReference type="GlyGen" id="Q9Y6N8">
    <property type="glycosylation" value="4 sites, 4 N-linked glycans (4 sites)"/>
</dbReference>
<dbReference type="iPTMnet" id="Q9Y6N8"/>
<dbReference type="PhosphoSitePlus" id="Q9Y6N8"/>
<dbReference type="BioMuta" id="CDH10"/>
<dbReference type="DMDM" id="116241276"/>
<dbReference type="jPOST" id="Q9Y6N8"/>
<dbReference type="MassIVE" id="Q9Y6N8"/>
<dbReference type="PaxDb" id="9606-ENSP00000264463"/>
<dbReference type="PeptideAtlas" id="Q9Y6N8"/>
<dbReference type="ProteomicsDB" id="86749"/>
<dbReference type="Antibodypedia" id="2223">
    <property type="antibodies" value="204 antibodies from 30 providers"/>
</dbReference>
<dbReference type="DNASU" id="1008"/>
<dbReference type="Ensembl" id="ENST00000264463.8">
    <property type="protein sequence ID" value="ENSP00000264463.4"/>
    <property type="gene ID" value="ENSG00000040731.10"/>
</dbReference>
<dbReference type="GeneID" id="1008"/>
<dbReference type="KEGG" id="hsa:1008"/>
<dbReference type="MANE-Select" id="ENST00000264463.8">
    <property type="protein sequence ID" value="ENSP00000264463.4"/>
    <property type="RefSeq nucleotide sequence ID" value="NM_006727.5"/>
    <property type="RefSeq protein sequence ID" value="NP_006718.2"/>
</dbReference>
<dbReference type="AGR" id="HGNC:1749"/>
<dbReference type="CTD" id="1008"/>
<dbReference type="DisGeNET" id="1008"/>
<dbReference type="GeneCards" id="CDH10"/>
<dbReference type="HGNC" id="HGNC:1749">
    <property type="gene designation" value="CDH10"/>
</dbReference>
<dbReference type="HPA" id="ENSG00000040731">
    <property type="expression patterns" value="Tissue enriched (brain)"/>
</dbReference>
<dbReference type="MalaCards" id="CDH10"/>
<dbReference type="MIM" id="604555">
    <property type="type" value="gene"/>
</dbReference>
<dbReference type="neXtProt" id="NX_Q9Y6N8"/>
<dbReference type="OpenTargets" id="ENSG00000040731"/>
<dbReference type="PharmGKB" id="PA26283"/>
<dbReference type="VEuPathDB" id="HostDB:ENSG00000040731"/>
<dbReference type="eggNOG" id="KOG3594">
    <property type="taxonomic scope" value="Eukaryota"/>
</dbReference>
<dbReference type="GeneTree" id="ENSGT00940000154187"/>
<dbReference type="HOGENOM" id="CLU_005284_3_1_1"/>
<dbReference type="InParanoid" id="Q9Y6N8"/>
<dbReference type="OMA" id="CSPEITF"/>
<dbReference type="OrthoDB" id="6252479at2759"/>
<dbReference type="PAN-GO" id="Q9Y6N8">
    <property type="GO annotations" value="9 GO annotations based on evolutionary models"/>
</dbReference>
<dbReference type="PhylomeDB" id="Q9Y6N8"/>
<dbReference type="TreeFam" id="TF329887"/>
<dbReference type="PathwayCommons" id="Q9Y6N8"/>
<dbReference type="Reactome" id="R-HSA-418990">
    <property type="pathway name" value="Adherens junctions interactions"/>
</dbReference>
<dbReference type="SignaLink" id="Q9Y6N8"/>
<dbReference type="SIGNOR" id="Q9Y6N8"/>
<dbReference type="BioGRID-ORCS" id="1008">
    <property type="hits" value="13 hits in 1137 CRISPR screens"/>
</dbReference>
<dbReference type="CD-CODE" id="FB4E32DD">
    <property type="entry name" value="Presynaptic clusters and postsynaptic densities"/>
</dbReference>
<dbReference type="ChiTaRS" id="CDH10">
    <property type="organism name" value="human"/>
</dbReference>
<dbReference type="GeneWiki" id="CDH10"/>
<dbReference type="GenomeRNAi" id="1008"/>
<dbReference type="Pharos" id="Q9Y6N8">
    <property type="development level" value="Tbio"/>
</dbReference>
<dbReference type="PRO" id="PR:Q9Y6N8"/>
<dbReference type="Proteomes" id="UP000005640">
    <property type="component" value="Chromosome 5"/>
</dbReference>
<dbReference type="RNAct" id="Q9Y6N8">
    <property type="molecule type" value="protein"/>
</dbReference>
<dbReference type="Bgee" id="ENSG00000040731">
    <property type="expression patterns" value="Expressed in Brodmann (1909) area 23 and 128 other cell types or tissues"/>
</dbReference>
<dbReference type="ExpressionAtlas" id="Q9Y6N8">
    <property type="expression patterns" value="baseline and differential"/>
</dbReference>
<dbReference type="GO" id="GO:0005912">
    <property type="term" value="C:adherens junction"/>
    <property type="evidence" value="ECO:0000318"/>
    <property type="project" value="GO_Central"/>
</dbReference>
<dbReference type="GO" id="GO:0016342">
    <property type="term" value="C:catenin complex"/>
    <property type="evidence" value="ECO:0000318"/>
    <property type="project" value="GO_Central"/>
</dbReference>
<dbReference type="GO" id="GO:0098982">
    <property type="term" value="C:GABA-ergic synapse"/>
    <property type="evidence" value="ECO:0007669"/>
    <property type="project" value="Ensembl"/>
</dbReference>
<dbReference type="GO" id="GO:0098978">
    <property type="term" value="C:glutamatergic synapse"/>
    <property type="evidence" value="ECO:0007669"/>
    <property type="project" value="Ensembl"/>
</dbReference>
<dbReference type="GO" id="GO:0005886">
    <property type="term" value="C:plasma membrane"/>
    <property type="evidence" value="ECO:0000304"/>
    <property type="project" value="Reactome"/>
</dbReference>
<dbReference type="GO" id="GO:0099634">
    <property type="term" value="C:postsynaptic specialization membrane"/>
    <property type="evidence" value="ECO:0007669"/>
    <property type="project" value="Ensembl"/>
</dbReference>
<dbReference type="GO" id="GO:0048787">
    <property type="term" value="C:presynaptic active zone membrane"/>
    <property type="evidence" value="ECO:0007669"/>
    <property type="project" value="Ensembl"/>
</dbReference>
<dbReference type="GO" id="GO:0008013">
    <property type="term" value="F:beta-catenin binding"/>
    <property type="evidence" value="ECO:0000318"/>
    <property type="project" value="GO_Central"/>
</dbReference>
<dbReference type="GO" id="GO:0045296">
    <property type="term" value="F:cadherin binding"/>
    <property type="evidence" value="ECO:0000318"/>
    <property type="project" value="GO_Central"/>
</dbReference>
<dbReference type="GO" id="GO:0005509">
    <property type="term" value="F:calcium ion binding"/>
    <property type="evidence" value="ECO:0007669"/>
    <property type="project" value="InterPro"/>
</dbReference>
<dbReference type="GO" id="GO:0034332">
    <property type="term" value="P:adherens junction organization"/>
    <property type="evidence" value="ECO:0000318"/>
    <property type="project" value="GO_Central"/>
</dbReference>
<dbReference type="GO" id="GO:0016339">
    <property type="term" value="P:calcium-dependent cell-cell adhesion via plasma membrane cell adhesion molecules"/>
    <property type="evidence" value="ECO:0000318"/>
    <property type="project" value="GO_Central"/>
</dbReference>
<dbReference type="GO" id="GO:0016477">
    <property type="term" value="P:cell migration"/>
    <property type="evidence" value="ECO:0000318"/>
    <property type="project" value="GO_Central"/>
</dbReference>
<dbReference type="GO" id="GO:0000902">
    <property type="term" value="P:cell morphogenesis"/>
    <property type="evidence" value="ECO:0000318"/>
    <property type="project" value="GO_Central"/>
</dbReference>
<dbReference type="GO" id="GO:0098609">
    <property type="term" value="P:cell-cell adhesion"/>
    <property type="evidence" value="ECO:0000303"/>
    <property type="project" value="UniProtKB"/>
</dbReference>
<dbReference type="GO" id="GO:0044331">
    <property type="term" value="P:cell-cell adhesion mediated by cadherin"/>
    <property type="evidence" value="ECO:0000318"/>
    <property type="project" value="GO_Central"/>
</dbReference>
<dbReference type="GO" id="GO:0007043">
    <property type="term" value="P:cell-cell junction assembly"/>
    <property type="evidence" value="ECO:0000318"/>
    <property type="project" value="GO_Central"/>
</dbReference>
<dbReference type="GO" id="GO:0007156">
    <property type="term" value="P:homophilic cell adhesion via plasma membrane adhesion molecules"/>
    <property type="evidence" value="ECO:0007669"/>
    <property type="project" value="InterPro"/>
</dbReference>
<dbReference type="GO" id="GO:0099560">
    <property type="term" value="P:synaptic membrane adhesion"/>
    <property type="evidence" value="ECO:0000318"/>
    <property type="project" value="GO_Central"/>
</dbReference>
<dbReference type="CDD" id="cd11304">
    <property type="entry name" value="Cadherin_repeat"/>
    <property type="match status" value="5"/>
</dbReference>
<dbReference type="FunFam" id="2.60.40.60:FF:000008">
    <property type="entry name" value="Cadherin 24"/>
    <property type="match status" value="1"/>
</dbReference>
<dbReference type="FunFam" id="2.60.40.60:FF:000009">
    <property type="entry name" value="Cadherin 24"/>
    <property type="match status" value="1"/>
</dbReference>
<dbReference type="FunFam" id="2.60.40.60:FF:000012">
    <property type="entry name" value="Cadherin 24"/>
    <property type="match status" value="1"/>
</dbReference>
<dbReference type="FunFam" id="2.60.40.60:FF:000017">
    <property type="entry name" value="Cadherin 24"/>
    <property type="match status" value="1"/>
</dbReference>
<dbReference type="FunFam" id="2.60.40.60:FF:000014">
    <property type="entry name" value="Cadherin 8"/>
    <property type="match status" value="1"/>
</dbReference>
<dbReference type="FunFam" id="4.10.900.10:FF:000006">
    <property type="entry name" value="Cadherin-9 preproprotein"/>
    <property type="match status" value="1"/>
</dbReference>
<dbReference type="Gene3D" id="2.60.40.60">
    <property type="entry name" value="Cadherins"/>
    <property type="match status" value="5"/>
</dbReference>
<dbReference type="Gene3D" id="4.10.900.10">
    <property type="entry name" value="TCF3-CBD (Catenin binding domain)"/>
    <property type="match status" value="1"/>
</dbReference>
<dbReference type="InterPro" id="IPR039808">
    <property type="entry name" value="Cadherin"/>
</dbReference>
<dbReference type="InterPro" id="IPR002126">
    <property type="entry name" value="Cadherin-like_dom"/>
</dbReference>
<dbReference type="InterPro" id="IPR015919">
    <property type="entry name" value="Cadherin-like_sf"/>
</dbReference>
<dbReference type="InterPro" id="IPR020894">
    <property type="entry name" value="Cadherin_CS"/>
</dbReference>
<dbReference type="InterPro" id="IPR000233">
    <property type="entry name" value="Cadherin_Y-type_LIR"/>
</dbReference>
<dbReference type="InterPro" id="IPR027397">
    <property type="entry name" value="Catenin-bd_sf"/>
</dbReference>
<dbReference type="PANTHER" id="PTHR24027:SF290">
    <property type="entry name" value="CADHERIN-10"/>
    <property type="match status" value="1"/>
</dbReference>
<dbReference type="PANTHER" id="PTHR24027">
    <property type="entry name" value="CADHERIN-23"/>
    <property type="match status" value="1"/>
</dbReference>
<dbReference type="Pfam" id="PF01049">
    <property type="entry name" value="CADH_Y-type_LIR"/>
    <property type="match status" value="1"/>
</dbReference>
<dbReference type="Pfam" id="PF00028">
    <property type="entry name" value="Cadherin"/>
    <property type="match status" value="5"/>
</dbReference>
<dbReference type="PRINTS" id="PR00205">
    <property type="entry name" value="CADHERIN"/>
</dbReference>
<dbReference type="SMART" id="SM00112">
    <property type="entry name" value="CA"/>
    <property type="match status" value="5"/>
</dbReference>
<dbReference type="SUPFAM" id="SSF49313">
    <property type="entry name" value="Cadherin-like"/>
    <property type="match status" value="5"/>
</dbReference>
<dbReference type="PROSITE" id="PS00232">
    <property type="entry name" value="CADHERIN_1"/>
    <property type="match status" value="3"/>
</dbReference>
<dbReference type="PROSITE" id="PS50268">
    <property type="entry name" value="CADHERIN_2"/>
    <property type="match status" value="5"/>
</dbReference>